<protein>
    <recommendedName>
        <fullName evidence="3">NUT family member 1</fullName>
    </recommendedName>
    <alternativeName>
        <fullName>Nuclear protein in testis</fullName>
    </alternativeName>
</protein>
<organism>
    <name type="scientific">Mus musculus</name>
    <name type="common">Mouse</name>
    <dbReference type="NCBI Taxonomy" id="10090"/>
    <lineage>
        <taxon>Eukaryota</taxon>
        <taxon>Metazoa</taxon>
        <taxon>Chordata</taxon>
        <taxon>Craniata</taxon>
        <taxon>Vertebrata</taxon>
        <taxon>Euteleostomi</taxon>
        <taxon>Mammalia</taxon>
        <taxon>Eutheria</taxon>
        <taxon>Euarchontoglires</taxon>
        <taxon>Glires</taxon>
        <taxon>Rodentia</taxon>
        <taxon>Myomorpha</taxon>
        <taxon>Muroidea</taxon>
        <taxon>Muridae</taxon>
        <taxon>Murinae</taxon>
        <taxon>Mus</taxon>
        <taxon>Mus</taxon>
    </lineage>
</organism>
<feature type="chain" id="PRO_0000311395" description="NUT family member 1">
    <location>
        <begin position="1"/>
        <end position="1126"/>
    </location>
</feature>
<feature type="region of interest" description="Disordered" evidence="2">
    <location>
        <begin position="1"/>
        <end position="56"/>
    </location>
</feature>
<feature type="region of interest" description="Disordered" evidence="2">
    <location>
        <begin position="334"/>
        <end position="367"/>
    </location>
</feature>
<feature type="region of interest" description="Disordered" evidence="2">
    <location>
        <begin position="475"/>
        <end position="515"/>
    </location>
</feature>
<feature type="region of interest" description="Disordered" evidence="2">
    <location>
        <begin position="537"/>
        <end position="559"/>
    </location>
</feature>
<feature type="region of interest" description="Disordered" evidence="2">
    <location>
        <begin position="664"/>
        <end position="692"/>
    </location>
</feature>
<feature type="region of interest" description="Disordered" evidence="2">
    <location>
        <begin position="755"/>
        <end position="810"/>
    </location>
</feature>
<feature type="region of interest" description="Disordered" evidence="2">
    <location>
        <begin position="932"/>
        <end position="1014"/>
    </location>
</feature>
<feature type="region of interest" description="Disordered" evidence="2">
    <location>
        <begin position="1032"/>
        <end position="1126"/>
    </location>
</feature>
<feature type="compositionally biased region" description="Pro residues" evidence="2">
    <location>
        <begin position="30"/>
        <end position="55"/>
    </location>
</feature>
<feature type="compositionally biased region" description="Basic residues" evidence="2">
    <location>
        <begin position="338"/>
        <end position="353"/>
    </location>
</feature>
<feature type="compositionally biased region" description="Polar residues" evidence="2">
    <location>
        <begin position="962"/>
        <end position="975"/>
    </location>
</feature>
<feature type="compositionally biased region" description="Basic and acidic residues" evidence="2">
    <location>
        <begin position="987"/>
        <end position="1005"/>
    </location>
</feature>
<feature type="compositionally biased region" description="Basic residues" evidence="2">
    <location>
        <begin position="1106"/>
        <end position="1126"/>
    </location>
</feature>
<feature type="modified residue" description="Phosphoserine" evidence="5">
    <location>
        <position position="973"/>
    </location>
</feature>
<feature type="modified residue" description="Phosphoserine" evidence="1">
    <location>
        <position position="1022"/>
    </location>
</feature>
<feature type="modified residue" description="Phosphoserine" evidence="1">
    <location>
        <position position="1025"/>
    </location>
</feature>
<feature type="modified residue" description="Phosphoserine" evidence="1">
    <location>
        <position position="1027"/>
    </location>
</feature>
<feature type="modified residue" description="N5-methylglutamine" evidence="1">
    <location>
        <position position="1042"/>
    </location>
</feature>
<name>NUTM1_MOUSE</name>
<reference key="1">
    <citation type="journal article" date="2005" name="Science">
        <title>The transcriptional landscape of the mammalian genome.</title>
        <authorList>
            <person name="Carninci P."/>
            <person name="Kasukawa T."/>
            <person name="Katayama S."/>
            <person name="Gough J."/>
            <person name="Frith M.C."/>
            <person name="Maeda N."/>
            <person name="Oyama R."/>
            <person name="Ravasi T."/>
            <person name="Lenhard B."/>
            <person name="Wells C."/>
            <person name="Kodzius R."/>
            <person name="Shimokawa K."/>
            <person name="Bajic V.B."/>
            <person name="Brenner S.E."/>
            <person name="Batalov S."/>
            <person name="Forrest A.R."/>
            <person name="Zavolan M."/>
            <person name="Davis M.J."/>
            <person name="Wilming L.G."/>
            <person name="Aidinis V."/>
            <person name="Allen J.E."/>
            <person name="Ambesi-Impiombato A."/>
            <person name="Apweiler R."/>
            <person name="Aturaliya R.N."/>
            <person name="Bailey T.L."/>
            <person name="Bansal M."/>
            <person name="Baxter L."/>
            <person name="Beisel K.W."/>
            <person name="Bersano T."/>
            <person name="Bono H."/>
            <person name="Chalk A.M."/>
            <person name="Chiu K.P."/>
            <person name="Choudhary V."/>
            <person name="Christoffels A."/>
            <person name="Clutterbuck D.R."/>
            <person name="Crowe M.L."/>
            <person name="Dalla E."/>
            <person name="Dalrymple B.P."/>
            <person name="de Bono B."/>
            <person name="Della Gatta G."/>
            <person name="di Bernardo D."/>
            <person name="Down T."/>
            <person name="Engstrom P."/>
            <person name="Fagiolini M."/>
            <person name="Faulkner G."/>
            <person name="Fletcher C.F."/>
            <person name="Fukushima T."/>
            <person name="Furuno M."/>
            <person name="Futaki S."/>
            <person name="Gariboldi M."/>
            <person name="Georgii-Hemming P."/>
            <person name="Gingeras T.R."/>
            <person name="Gojobori T."/>
            <person name="Green R.E."/>
            <person name="Gustincich S."/>
            <person name="Harbers M."/>
            <person name="Hayashi Y."/>
            <person name="Hensch T.K."/>
            <person name="Hirokawa N."/>
            <person name="Hill D."/>
            <person name="Huminiecki L."/>
            <person name="Iacono M."/>
            <person name="Ikeo K."/>
            <person name="Iwama A."/>
            <person name="Ishikawa T."/>
            <person name="Jakt M."/>
            <person name="Kanapin A."/>
            <person name="Katoh M."/>
            <person name="Kawasawa Y."/>
            <person name="Kelso J."/>
            <person name="Kitamura H."/>
            <person name="Kitano H."/>
            <person name="Kollias G."/>
            <person name="Krishnan S.P."/>
            <person name="Kruger A."/>
            <person name="Kummerfeld S.K."/>
            <person name="Kurochkin I.V."/>
            <person name="Lareau L.F."/>
            <person name="Lazarevic D."/>
            <person name="Lipovich L."/>
            <person name="Liu J."/>
            <person name="Liuni S."/>
            <person name="McWilliam S."/>
            <person name="Madan Babu M."/>
            <person name="Madera M."/>
            <person name="Marchionni L."/>
            <person name="Matsuda H."/>
            <person name="Matsuzawa S."/>
            <person name="Miki H."/>
            <person name="Mignone F."/>
            <person name="Miyake S."/>
            <person name="Morris K."/>
            <person name="Mottagui-Tabar S."/>
            <person name="Mulder N."/>
            <person name="Nakano N."/>
            <person name="Nakauchi H."/>
            <person name="Ng P."/>
            <person name="Nilsson R."/>
            <person name="Nishiguchi S."/>
            <person name="Nishikawa S."/>
            <person name="Nori F."/>
            <person name="Ohara O."/>
            <person name="Okazaki Y."/>
            <person name="Orlando V."/>
            <person name="Pang K.C."/>
            <person name="Pavan W.J."/>
            <person name="Pavesi G."/>
            <person name="Pesole G."/>
            <person name="Petrovsky N."/>
            <person name="Piazza S."/>
            <person name="Reed J."/>
            <person name="Reid J.F."/>
            <person name="Ring B.Z."/>
            <person name="Ringwald M."/>
            <person name="Rost B."/>
            <person name="Ruan Y."/>
            <person name="Salzberg S.L."/>
            <person name="Sandelin A."/>
            <person name="Schneider C."/>
            <person name="Schoenbach C."/>
            <person name="Sekiguchi K."/>
            <person name="Semple C.A."/>
            <person name="Seno S."/>
            <person name="Sessa L."/>
            <person name="Sheng Y."/>
            <person name="Shibata Y."/>
            <person name="Shimada H."/>
            <person name="Shimada K."/>
            <person name="Silva D."/>
            <person name="Sinclair B."/>
            <person name="Sperling S."/>
            <person name="Stupka E."/>
            <person name="Sugiura K."/>
            <person name="Sultana R."/>
            <person name="Takenaka Y."/>
            <person name="Taki K."/>
            <person name="Tammoja K."/>
            <person name="Tan S.L."/>
            <person name="Tang S."/>
            <person name="Taylor M.S."/>
            <person name="Tegner J."/>
            <person name="Teichmann S.A."/>
            <person name="Ueda H.R."/>
            <person name="van Nimwegen E."/>
            <person name="Verardo R."/>
            <person name="Wei C.L."/>
            <person name="Yagi K."/>
            <person name="Yamanishi H."/>
            <person name="Zabarovsky E."/>
            <person name="Zhu S."/>
            <person name="Zimmer A."/>
            <person name="Hide W."/>
            <person name="Bult C."/>
            <person name="Grimmond S.M."/>
            <person name="Teasdale R.D."/>
            <person name="Liu E.T."/>
            <person name="Brusic V."/>
            <person name="Quackenbush J."/>
            <person name="Wahlestedt C."/>
            <person name="Mattick J.S."/>
            <person name="Hume D.A."/>
            <person name="Kai C."/>
            <person name="Sasaki D."/>
            <person name="Tomaru Y."/>
            <person name="Fukuda S."/>
            <person name="Kanamori-Katayama M."/>
            <person name="Suzuki M."/>
            <person name="Aoki J."/>
            <person name="Arakawa T."/>
            <person name="Iida J."/>
            <person name="Imamura K."/>
            <person name="Itoh M."/>
            <person name="Kato T."/>
            <person name="Kawaji H."/>
            <person name="Kawagashira N."/>
            <person name="Kawashima T."/>
            <person name="Kojima M."/>
            <person name="Kondo S."/>
            <person name="Konno H."/>
            <person name="Nakano K."/>
            <person name="Ninomiya N."/>
            <person name="Nishio T."/>
            <person name="Okada M."/>
            <person name="Plessy C."/>
            <person name="Shibata K."/>
            <person name="Shiraki T."/>
            <person name="Suzuki S."/>
            <person name="Tagami M."/>
            <person name="Waki K."/>
            <person name="Watahiki A."/>
            <person name="Okamura-Oho Y."/>
            <person name="Suzuki H."/>
            <person name="Kawai J."/>
            <person name="Hayashizaki Y."/>
        </authorList>
    </citation>
    <scope>NUCLEOTIDE SEQUENCE [LARGE SCALE MRNA]</scope>
    <source>
        <strain>C57BL/6J</strain>
        <tissue>Testis</tissue>
    </source>
</reference>
<reference key="2">
    <citation type="journal article" date="2009" name="PLoS Biol.">
        <title>Lineage-specific biology revealed by a finished genome assembly of the mouse.</title>
        <authorList>
            <person name="Church D.M."/>
            <person name="Goodstadt L."/>
            <person name="Hillier L.W."/>
            <person name="Zody M.C."/>
            <person name="Goldstein S."/>
            <person name="She X."/>
            <person name="Bult C.J."/>
            <person name="Agarwala R."/>
            <person name="Cherry J.L."/>
            <person name="DiCuccio M."/>
            <person name="Hlavina W."/>
            <person name="Kapustin Y."/>
            <person name="Meric P."/>
            <person name="Maglott D."/>
            <person name="Birtle Z."/>
            <person name="Marques A.C."/>
            <person name="Graves T."/>
            <person name="Zhou S."/>
            <person name="Teague B."/>
            <person name="Potamousis K."/>
            <person name="Churas C."/>
            <person name="Place M."/>
            <person name="Herschleb J."/>
            <person name="Runnheim R."/>
            <person name="Forrest D."/>
            <person name="Amos-Landgraf J."/>
            <person name="Schwartz D.C."/>
            <person name="Cheng Z."/>
            <person name="Lindblad-Toh K."/>
            <person name="Eichler E.E."/>
            <person name="Ponting C.P."/>
        </authorList>
    </citation>
    <scope>NUCLEOTIDE SEQUENCE [LARGE SCALE GENOMIC DNA]</scope>
    <source>
        <strain>C57BL/6J</strain>
    </source>
</reference>
<reference key="3">
    <citation type="journal article" date="2004" name="Genome Res.">
        <title>The status, quality, and expansion of the NIH full-length cDNA project: the Mammalian Gene Collection (MGC).</title>
        <authorList>
            <consortium name="The MGC Project Team"/>
        </authorList>
    </citation>
    <scope>NUCLEOTIDE SEQUENCE [LARGE SCALE MRNA]</scope>
</reference>
<reference key="4">
    <citation type="journal article" date="2010" name="Cell">
        <title>A tissue-specific atlas of mouse protein phosphorylation and expression.</title>
        <authorList>
            <person name="Huttlin E.L."/>
            <person name="Jedrychowski M.P."/>
            <person name="Elias J.E."/>
            <person name="Goswami T."/>
            <person name="Rad R."/>
            <person name="Beausoleil S.A."/>
            <person name="Villen J."/>
            <person name="Haas W."/>
            <person name="Sowa M.E."/>
            <person name="Gygi S.P."/>
        </authorList>
    </citation>
    <scope>PHOSPHORYLATION [LARGE SCALE ANALYSIS] AT SER-973</scope>
    <scope>IDENTIFICATION BY MASS SPECTROMETRY [LARGE SCALE ANALYSIS]</scope>
    <source>
        <tissue>Testis</tissue>
    </source>
</reference>
<comment type="function">
    <text evidence="1">Plays a role in the regulation of proliferation. Regulates TERT expression by modulating SP1 binding to TERT promoter binding sites.</text>
</comment>
<comment type="subcellular location">
    <subcellularLocation>
        <location evidence="1">Cytoplasm</location>
    </subcellularLocation>
    <subcellularLocation>
        <location evidence="1">Nucleus</location>
    </subcellularLocation>
    <text evidence="1">Shuttles between nucleus and cytoplasm.</text>
</comment>
<comment type="PTM">
    <text evidence="1">Methylated at Gln-1042 by N6AMT1.</text>
</comment>
<comment type="PTM">
    <text evidence="1">Phosphorylation on Ser-1022, Ser-1025 or Ser-1027 is important for cytoplasmic export.</text>
</comment>
<comment type="similarity">
    <text evidence="3">Belongs to the NUT family.</text>
</comment>
<evidence type="ECO:0000250" key="1">
    <source>
        <dbReference type="UniProtKB" id="Q86Y26"/>
    </source>
</evidence>
<evidence type="ECO:0000256" key="2">
    <source>
        <dbReference type="SAM" id="MobiDB-lite"/>
    </source>
</evidence>
<evidence type="ECO:0000305" key="3"/>
<evidence type="ECO:0000312" key="4">
    <source>
        <dbReference type="MGI" id="MGI:2661384"/>
    </source>
</evidence>
<evidence type="ECO:0007744" key="5">
    <source>
    </source>
</evidence>
<keyword id="KW-0963">Cytoplasm</keyword>
<keyword id="KW-0488">Methylation</keyword>
<keyword id="KW-0539">Nucleus</keyword>
<keyword id="KW-0597">Phosphoprotein</keyword>
<keyword id="KW-1185">Reference proteome</keyword>
<gene>
    <name evidence="4" type="primary">Nutm1</name>
    <name type="synonym">Nut</name>
</gene>
<proteinExistence type="evidence at protein level"/>
<accession>Q8BHP2</accession>
<sequence>MASDGTSPLPGPDMSMKPGTGLSPFSALPFAPPPPVPPDQPLWEPSPQPPIPPVFSPSNPLLLSAFPSPLLVTGEGGPGPSVAGTGQVIVKVKTDVGPAESSQTQNLIVTQTALNWIPSGAPCGSQEGPPPPRYVTASNVKTILPAVAVGVSQEGLAGLPLQVLPPAAQLAPIVPLEKPWPGTQATTMEGGPVAARKPSQGDLAYASKGVYENYRRWQRYKVLARTHLSQSPDVEALSCFLIPVLRSLARLKPTMTLEEGLPRALQEWERTSNFDRMIFYEMAEKFMEFEAEEETQIQNAQLMNGSPGLSPIAPLKLDPPGSMVPEACQQPVYIPKKAASKTRAPRRRQRKPQRPPVPEAPKEIPPEAVQEYVDIMDGLMGSYVDTGKTEEEEEGQQEGAGMYPDPSLLSYIDELCSQEVFVSKVEAVIHPQFLADLLSPEEQRDPLSLLEELEQEEGLNLAQLVQKRLLALEEEDAQTPPSCSGAQSDSSPSVSDEDEDGGQRRRPSPGLQGAAGIVRIGKSASPGKQAREIHGGQEQTLGGPAGIHKDGNNLPSPSSWDVQLELTASQGMPVLLGMERKMSGKAIKQLSATQDGHLGRTGSPGYYPVADRNPEVLPCCWQEDPQHMRAPNFDVGLTEPVPLQGLGLEKQALTLQIGKRIGGAGMLTRGREPPSVVSQKGSSRAVRGDDRGPGMLQSYSQNHSPGAAGNLDRVSLSPGLWLSSDMGAVGLELPLQIETVIDSIQDEACRREDQALNSRNSASLGPRKNTVPKDVGNSVIPSGGPDTTAVPEKRNPCSLPGSLMASGPGLRSKEKISKENQALSPKTIQNPSDLWAEACPPLLPTLVSSTLGSSKDTLIPTCQGNLLIIGTQDASSLAQTSQKAESRGNLLFPLLENIDQVTILDVKDDSCPQPGVSKDSCLSNFNSYNLQGEGREDTVSSKPTDLVPLQDNQESYTHETTKLTNGQGQGSTSPRWATRDAYILRETPIKEKCTSADRAKRRETEKEEEDEELSNFSYLLASKLSLSSGGLPLSTRQASGGQGIVKTSRHSTEVDDLGQPSPPPKSGKQALVGSPATVVERDQQGAQFNGSGQKPLALGMAQLPQPRKRRRDGFVTSKRKKRRRSQ</sequence>
<dbReference type="EMBL" id="AK077049">
    <property type="protein sequence ID" value="BAC36581.1"/>
    <property type="molecule type" value="mRNA"/>
</dbReference>
<dbReference type="EMBL" id="AL713853">
    <property type="status" value="NOT_ANNOTATED_CDS"/>
    <property type="molecule type" value="Genomic_DNA"/>
</dbReference>
<dbReference type="EMBL" id="BC125332">
    <property type="protein sequence ID" value="AAI25333.1"/>
    <property type="molecule type" value="mRNA"/>
</dbReference>
<dbReference type="EMBL" id="BC125334">
    <property type="protein sequence ID" value="AAI25335.1"/>
    <property type="molecule type" value="mRNA"/>
</dbReference>
<dbReference type="CCDS" id="CCDS16549.1"/>
<dbReference type="RefSeq" id="NP_766109.1">
    <property type="nucleotide sequence ID" value="NM_172521.2"/>
</dbReference>
<dbReference type="SMR" id="Q8BHP2"/>
<dbReference type="BioGRID" id="229468">
    <property type="interactions" value="3"/>
</dbReference>
<dbReference type="FunCoup" id="Q8BHP2">
    <property type="interactions" value="20"/>
</dbReference>
<dbReference type="STRING" id="10090.ENSMUSP00000048263"/>
<dbReference type="GlyGen" id="Q8BHP2">
    <property type="glycosylation" value="1 site"/>
</dbReference>
<dbReference type="iPTMnet" id="Q8BHP2"/>
<dbReference type="PhosphoSitePlus" id="Q8BHP2"/>
<dbReference type="jPOST" id="Q8BHP2"/>
<dbReference type="PaxDb" id="10090-ENSMUSP00000048263"/>
<dbReference type="ProteomicsDB" id="293786"/>
<dbReference type="Antibodypedia" id="41965">
    <property type="antibodies" value="137 antibodies from 20 providers"/>
</dbReference>
<dbReference type="Ensembl" id="ENSMUST00000043970.2">
    <property type="protein sequence ID" value="ENSMUSP00000048263.2"/>
    <property type="gene ID" value="ENSMUSG00000041358.2"/>
</dbReference>
<dbReference type="GeneID" id="213765"/>
<dbReference type="KEGG" id="mmu:213765"/>
<dbReference type="UCSC" id="uc008loq.1">
    <property type="organism name" value="mouse"/>
</dbReference>
<dbReference type="AGR" id="MGI:2661384"/>
<dbReference type="CTD" id="256646"/>
<dbReference type="MGI" id="MGI:2661384">
    <property type="gene designation" value="Nutm1"/>
</dbReference>
<dbReference type="VEuPathDB" id="HostDB:ENSMUSG00000041358"/>
<dbReference type="eggNOG" id="ENOG502RSZ6">
    <property type="taxonomic scope" value="Eukaryota"/>
</dbReference>
<dbReference type="GeneTree" id="ENSGT00410000025793"/>
<dbReference type="HOGENOM" id="CLU_009264_0_0_1"/>
<dbReference type="InParanoid" id="Q8BHP2"/>
<dbReference type="OMA" id="PGPDCLI"/>
<dbReference type="OrthoDB" id="9836538at2759"/>
<dbReference type="PhylomeDB" id="Q8BHP2"/>
<dbReference type="TreeFam" id="TF337728"/>
<dbReference type="BioGRID-ORCS" id="213765">
    <property type="hits" value="1 hit in 78 CRISPR screens"/>
</dbReference>
<dbReference type="PRO" id="PR:Q8BHP2"/>
<dbReference type="Proteomes" id="UP000000589">
    <property type="component" value="Chromosome 2"/>
</dbReference>
<dbReference type="RNAct" id="Q8BHP2">
    <property type="molecule type" value="protein"/>
</dbReference>
<dbReference type="Bgee" id="ENSMUSG00000041358">
    <property type="expression patterns" value="Expressed in spermatid and 10 other cell types or tissues"/>
</dbReference>
<dbReference type="GO" id="GO:0005737">
    <property type="term" value="C:cytoplasm"/>
    <property type="evidence" value="ECO:0007669"/>
    <property type="project" value="UniProtKB-SubCell"/>
</dbReference>
<dbReference type="GO" id="GO:0005634">
    <property type="term" value="C:nucleus"/>
    <property type="evidence" value="ECO:0007669"/>
    <property type="project" value="UniProtKB-SubCell"/>
</dbReference>
<dbReference type="InterPro" id="IPR024310">
    <property type="entry name" value="NUT"/>
</dbReference>
<dbReference type="InterPro" id="IPR024309">
    <property type="entry name" value="NUT_N"/>
</dbReference>
<dbReference type="PANTHER" id="PTHR22879">
    <property type="entry name" value="NUT FAMILY MEMBER 1"/>
    <property type="match status" value="1"/>
</dbReference>
<dbReference type="PANTHER" id="PTHR22879:SF13">
    <property type="entry name" value="NUT FAMILY MEMBER 1"/>
    <property type="match status" value="1"/>
</dbReference>
<dbReference type="Pfam" id="PF12881">
    <property type="entry name" value="NUT"/>
    <property type="match status" value="2"/>
</dbReference>